<accession>P52430</accession>
<accession>Q91X30</accession>
<name>PON1_MOUSE</name>
<proteinExistence type="evidence at protein level"/>
<comment type="function">
    <text evidence="2">Hydrolyzes the toxic metabolites of a variety of organophosphorus insecticides. Capable of hydrolyzing a broad spectrum of organophosphate substrates and lactones, and a number of aromatic carboxylic acid esters. Mediates an enzymatic protection of low density lipoproteins against oxidative modification.</text>
</comment>
<comment type="catalytic activity">
    <reaction evidence="4">
        <text>a phenyl acetate + H2O = a phenol + acetate + H(+)</text>
        <dbReference type="Rhea" id="RHEA:17309"/>
        <dbReference type="ChEBI" id="CHEBI:15377"/>
        <dbReference type="ChEBI" id="CHEBI:15378"/>
        <dbReference type="ChEBI" id="CHEBI:30089"/>
        <dbReference type="ChEBI" id="CHEBI:33853"/>
        <dbReference type="ChEBI" id="CHEBI:140310"/>
        <dbReference type="EC" id="3.1.1.2"/>
    </reaction>
</comment>
<comment type="catalytic activity">
    <reaction evidence="4">
        <text>An aryl dialkyl phosphate + H2O = dialkyl phosphate + an aryl alcohol.</text>
        <dbReference type="EC" id="3.1.8.1"/>
    </reaction>
</comment>
<comment type="catalytic activity">
    <reaction evidence="4">
        <text>an N-acyl-L-homoserine lactone + H2O = an N-acyl-L-homoserine + H(+)</text>
        <dbReference type="Rhea" id="RHEA:22576"/>
        <dbReference type="ChEBI" id="CHEBI:15377"/>
        <dbReference type="ChEBI" id="CHEBI:15378"/>
        <dbReference type="ChEBI" id="CHEBI:55474"/>
        <dbReference type="ChEBI" id="CHEBI:58921"/>
        <dbReference type="EC" id="3.1.1.81"/>
    </reaction>
</comment>
<comment type="cofactor">
    <cofactor evidence="1">
        <name>Ca(2+)</name>
        <dbReference type="ChEBI" id="CHEBI:29108"/>
    </cofactor>
    <text evidence="1">Binds 2 calcium ions per subunit.</text>
</comment>
<comment type="subunit">
    <text evidence="2">Homodimer. Interacts with CLU.</text>
</comment>
<comment type="subcellular location">
    <subcellularLocation>
        <location>Secreted</location>
        <location>Extracellular space</location>
    </subcellularLocation>
</comment>
<comment type="tissue specificity">
    <text>Plasma, liver, kidney, heart, brain, small intestine and lung. In the plasma, associated with HDL.</text>
</comment>
<comment type="PTM">
    <text evidence="2">The signal sequence is not cleaved.</text>
</comment>
<comment type="miscellaneous">
    <text evidence="2">The preferential association of PON1 with HDL is mediated in part by its signal peptide, by binding phospholipids directly, rather than binding apo AI. The retained signal peptide may allow transfer of the protein between phospholipid surfaces.</text>
</comment>
<comment type="similarity">
    <text evidence="6">Belongs to the paraoxonase family.</text>
</comment>
<keyword id="KW-0106">Calcium</keyword>
<keyword id="KW-1015">Disulfide bond</keyword>
<keyword id="KW-0325">Glycoprotein</keyword>
<keyword id="KW-0345">HDL</keyword>
<keyword id="KW-0378">Hydrolase</keyword>
<keyword id="KW-0479">Metal-binding</keyword>
<keyword id="KW-1185">Reference proteome</keyword>
<keyword id="KW-0964">Secreted</keyword>
<keyword id="KW-0732">Signal</keyword>
<reference key="1">
    <citation type="journal article" date="1995" name="Proc. Natl. Acad. Sci. U.S.A.">
        <title>Reconsideration of the catalytic center and mechanism of mammalian paraoxonase/arylesterase.</title>
        <authorList>
            <person name="Sorenson R.C."/>
            <person name="Primo-Parmo S.L."/>
            <person name="Kuo C.-L."/>
            <person name="Adkins S."/>
            <person name="Lockridge O."/>
            <person name="La Du B.N."/>
        </authorList>
    </citation>
    <scope>NUCLEOTIDE SEQUENCE [GENOMIC DNA]</scope>
    <source>
        <strain>BALB/cJ</strain>
        <tissue>Liver</tissue>
    </source>
</reference>
<reference key="2">
    <citation type="journal article" date="1996" name="J. Clin. Invest.">
        <title>Genetic-dietary regulation of serum paraoxonase expression and its role in atherogenesis in a mouse model.</title>
        <authorList>
            <person name="Shih D.M."/>
            <person name="Gu L."/>
            <person name="Hama S."/>
            <person name="Xia Y.R."/>
            <person name="Navab M."/>
            <person name="Fogelman A.M."/>
            <person name="Lusis A.J."/>
        </authorList>
    </citation>
    <scope>NUCLEOTIDE SEQUENCE [MRNA]</scope>
    <source>
        <strain>C57BL/6 X CBA</strain>
        <tissue>Liver</tissue>
    </source>
</reference>
<reference key="3">
    <citation type="journal article" date="1997" name="Pharmacogenetics">
        <title>Paraoxonase (PON1) gene in mice: sequencing, chromosomal localization and developmental expression.</title>
        <authorList>
            <person name="Li W.F."/>
            <person name="Matthews C."/>
            <person name="Disteche C.M."/>
            <person name="Costa L.G."/>
            <person name="Furlong C.E."/>
        </authorList>
    </citation>
    <scope>NUCLEOTIDE SEQUENCE [MRNA]</scope>
    <source>
        <strain>BALB/cJ</strain>
    </source>
</reference>
<reference key="4">
    <citation type="journal article" date="2004" name="Genome Res.">
        <title>The status, quality, and expansion of the NIH full-length cDNA project: the Mammalian Gene Collection (MGC).</title>
        <authorList>
            <consortium name="The MGC Project Team"/>
        </authorList>
    </citation>
    <scope>NUCLEOTIDE SEQUENCE [LARGE SCALE MRNA]</scope>
    <source>
        <strain>FVB/N</strain>
        <tissue>Liver</tissue>
    </source>
</reference>
<reference key="5">
    <citation type="journal article" date="2005" name="FEBS Lett.">
        <title>Quorum quenching enzyme activity is widely conserved in the sera of mammalian species.</title>
        <authorList>
            <person name="Yang F."/>
            <person name="Wang L.H."/>
            <person name="Wang J."/>
            <person name="Dong Y.H."/>
            <person name="Hu J.Y."/>
            <person name="Zhang L.H."/>
        </authorList>
    </citation>
    <scope>CATALYTIC ACTIVITY</scope>
</reference>
<reference key="6">
    <citation type="journal article" date="2007" name="J. Proteome Res.">
        <title>Enhanced analysis of the mouse plasma proteome using cysteine-containing tryptic glycopeptides.</title>
        <authorList>
            <person name="Bernhard O.K."/>
            <person name="Kapp E.A."/>
            <person name="Simpson R.J."/>
        </authorList>
    </citation>
    <scope>GLYCOSYLATION [LARGE SCALE ANALYSIS] AT ASN-253</scope>
    <source>
        <strain>C57BL/6J</strain>
        <tissue>Plasma</tissue>
    </source>
</reference>
<reference key="7">
    <citation type="journal article" date="2010" name="Cell">
        <title>A tissue-specific atlas of mouse protein phosphorylation and expression.</title>
        <authorList>
            <person name="Huttlin E.L."/>
            <person name="Jedrychowski M.P."/>
            <person name="Elias J.E."/>
            <person name="Goswami T."/>
            <person name="Rad R."/>
            <person name="Beausoleil S.A."/>
            <person name="Villen J."/>
            <person name="Haas W."/>
            <person name="Sowa M.E."/>
            <person name="Gygi S.P."/>
        </authorList>
    </citation>
    <scope>IDENTIFICATION BY MASS SPECTROMETRY [LARGE SCALE ANALYSIS]</scope>
    <source>
        <tissue>Brown adipose tissue</tissue>
        <tissue>Liver</tissue>
        <tissue>Lung</tissue>
        <tissue>Spleen</tissue>
    </source>
</reference>
<evidence type="ECO:0000250" key="1"/>
<evidence type="ECO:0000250" key="2">
    <source>
        <dbReference type="UniProtKB" id="P27169"/>
    </source>
</evidence>
<evidence type="ECO:0000255" key="3"/>
<evidence type="ECO:0000269" key="4">
    <source>
    </source>
</evidence>
<evidence type="ECO:0000269" key="5">
    <source>
    </source>
</evidence>
<evidence type="ECO:0000305" key="6"/>
<feature type="chain" id="PRO_0000223282" description="Serum paraoxonase/arylesterase 1">
    <location>
        <begin position="1"/>
        <end position="355"/>
    </location>
</feature>
<feature type="signal peptide" description="Not cleaved">
    <location>
        <begin position="1"/>
        <end status="unknown"/>
    </location>
</feature>
<feature type="active site" description="Proton acceptor" evidence="2">
    <location>
        <position position="115"/>
    </location>
</feature>
<feature type="binding site" evidence="2">
    <location>
        <position position="53"/>
    </location>
    <ligand>
        <name>Ca(2+)</name>
        <dbReference type="ChEBI" id="CHEBI:29108"/>
        <label>1</label>
        <note>catalytic</note>
    </ligand>
</feature>
<feature type="binding site" evidence="2">
    <location>
        <position position="54"/>
    </location>
    <ligand>
        <name>Ca(2+)</name>
        <dbReference type="ChEBI" id="CHEBI:29108"/>
        <label>2</label>
    </ligand>
</feature>
<feature type="binding site" evidence="2">
    <location>
        <position position="117"/>
    </location>
    <ligand>
        <name>Ca(2+)</name>
        <dbReference type="ChEBI" id="CHEBI:29108"/>
        <label>2</label>
    </ligand>
</feature>
<feature type="binding site" evidence="2">
    <location>
        <position position="168"/>
    </location>
    <ligand>
        <name>Ca(2+)</name>
        <dbReference type="ChEBI" id="CHEBI:29108"/>
        <label>1</label>
        <note>catalytic</note>
    </ligand>
</feature>
<feature type="binding site" evidence="2">
    <location>
        <position position="169"/>
    </location>
    <ligand>
        <name>Ca(2+)</name>
        <dbReference type="ChEBI" id="CHEBI:29108"/>
        <label>2</label>
    </ligand>
</feature>
<feature type="binding site" evidence="2">
    <location>
        <position position="224"/>
    </location>
    <ligand>
        <name>Ca(2+)</name>
        <dbReference type="ChEBI" id="CHEBI:29108"/>
        <label>1</label>
        <note>catalytic</note>
    </ligand>
</feature>
<feature type="binding site" evidence="2">
    <location>
        <position position="269"/>
    </location>
    <ligand>
        <name>Ca(2+)</name>
        <dbReference type="ChEBI" id="CHEBI:29108"/>
        <label>1</label>
        <note>catalytic</note>
    </ligand>
</feature>
<feature type="binding site" evidence="2">
    <location>
        <position position="270"/>
    </location>
    <ligand>
        <name>Ca(2+)</name>
        <dbReference type="ChEBI" id="CHEBI:29108"/>
        <label>1</label>
        <note>catalytic</note>
    </ligand>
</feature>
<feature type="glycosylation site" description="N-linked (GlcNAc...) asparagine" evidence="5">
    <location>
        <position position="253"/>
    </location>
</feature>
<feature type="glycosylation site" description="N-linked (GlcNAc...) asparagine" evidence="3">
    <location>
        <position position="270"/>
    </location>
</feature>
<feature type="glycosylation site" description="N-linked (GlcNAc...) asparagine" evidence="3">
    <location>
        <position position="324"/>
    </location>
</feature>
<feature type="disulfide bond" evidence="2">
    <location>
        <begin position="42"/>
        <end position="353"/>
    </location>
</feature>
<feature type="sequence conflict" description="In Ref. 4; AAH12706." evidence="6" ref="4">
    <original>G</original>
    <variation>E</variation>
    <location>
        <position position="61"/>
    </location>
</feature>
<feature type="sequence conflict" description="In Ref. 2; AAC52496." evidence="6" ref="2">
    <original>F</original>
    <variation>L</variation>
    <location>
        <position position="186"/>
    </location>
</feature>
<protein>
    <recommendedName>
        <fullName>Serum paraoxonase/arylesterase 1</fullName>
        <shortName>PON 1</shortName>
        <ecNumber evidence="4">3.1.1.2</ecNumber>
        <ecNumber evidence="4">3.1.1.81</ecNumber>
        <ecNumber evidence="4">3.1.8.1</ecNumber>
    </recommendedName>
    <alternativeName>
        <fullName>Aromatic esterase 1</fullName>
        <shortName>A-esterase 1</shortName>
    </alternativeName>
    <alternativeName>
        <fullName>Serum aryldialkylphosphatase 1</fullName>
    </alternativeName>
</protein>
<dbReference type="EC" id="3.1.1.2" evidence="4"/>
<dbReference type="EC" id="3.1.1.81" evidence="4"/>
<dbReference type="EC" id="3.1.8.1" evidence="4"/>
<dbReference type="EMBL" id="L40488">
    <property type="protein sequence ID" value="AAA99445.1"/>
    <property type="molecule type" value="Genomic_DNA"/>
</dbReference>
<dbReference type="EMBL" id="U32684">
    <property type="protein sequence ID" value="AAC52496.1"/>
    <property type="molecule type" value="mRNA"/>
</dbReference>
<dbReference type="EMBL" id="U72636">
    <property type="protein sequence ID" value="AAB17394.1"/>
    <property type="molecule type" value="mRNA"/>
</dbReference>
<dbReference type="EMBL" id="BC012706">
    <property type="protein sequence ID" value="AAH12706.1"/>
    <property type="molecule type" value="mRNA"/>
</dbReference>
<dbReference type="CCDS" id="CCDS19898.1"/>
<dbReference type="PIR" id="T10082">
    <property type="entry name" value="T10082"/>
</dbReference>
<dbReference type="RefSeq" id="NP_035264.2">
    <property type="nucleotide sequence ID" value="NM_011134.4"/>
</dbReference>
<dbReference type="SMR" id="P52430"/>
<dbReference type="FunCoup" id="P52430">
    <property type="interactions" value="6"/>
</dbReference>
<dbReference type="IntAct" id="P52430">
    <property type="interactions" value="1"/>
</dbReference>
<dbReference type="STRING" id="10090.ENSMUSP00000002663"/>
<dbReference type="GlyCosmos" id="P52430">
    <property type="glycosylation" value="3 sites, No reported glycans"/>
</dbReference>
<dbReference type="GlyGen" id="P52430">
    <property type="glycosylation" value="4 sites, 2 N-linked glycans (2 sites), 1 O-linked glycan (1 site)"/>
</dbReference>
<dbReference type="iPTMnet" id="P52430"/>
<dbReference type="PhosphoSitePlus" id="P52430"/>
<dbReference type="SwissPalm" id="P52430"/>
<dbReference type="CPTAC" id="non-CPTAC-3380"/>
<dbReference type="jPOST" id="P52430"/>
<dbReference type="PaxDb" id="10090-ENSMUSP00000002663"/>
<dbReference type="PeptideAtlas" id="P52430"/>
<dbReference type="ProteomicsDB" id="289787"/>
<dbReference type="Pumba" id="P52430"/>
<dbReference type="Antibodypedia" id="883">
    <property type="antibodies" value="644 antibodies from 38 providers"/>
</dbReference>
<dbReference type="DNASU" id="18979"/>
<dbReference type="Ensembl" id="ENSMUST00000002663.12">
    <property type="protein sequence ID" value="ENSMUSP00000002663.6"/>
    <property type="gene ID" value="ENSMUSG00000002588.14"/>
</dbReference>
<dbReference type="GeneID" id="18979"/>
<dbReference type="KEGG" id="mmu:18979"/>
<dbReference type="UCSC" id="uc009awd.2">
    <property type="organism name" value="mouse"/>
</dbReference>
<dbReference type="AGR" id="MGI:103295"/>
<dbReference type="CTD" id="5444"/>
<dbReference type="MGI" id="MGI:103295">
    <property type="gene designation" value="Pon1"/>
</dbReference>
<dbReference type="VEuPathDB" id="HostDB:ENSMUSG00000002588"/>
<dbReference type="eggNOG" id="ENOG502S3B5">
    <property type="taxonomic scope" value="Eukaryota"/>
</dbReference>
<dbReference type="GeneTree" id="ENSGT00390000008932"/>
<dbReference type="HOGENOM" id="CLU_049839_0_1_1"/>
<dbReference type="InParanoid" id="P52430"/>
<dbReference type="OMA" id="YFADPYF"/>
<dbReference type="OrthoDB" id="423498at2759"/>
<dbReference type="PhylomeDB" id="P52430"/>
<dbReference type="TreeFam" id="TF322436"/>
<dbReference type="BRENDA" id="3.1.1.2">
    <property type="organism ID" value="3474"/>
</dbReference>
<dbReference type="BRENDA" id="3.1.1.25">
    <property type="organism ID" value="3474"/>
</dbReference>
<dbReference type="BRENDA" id="3.1.8.1">
    <property type="organism ID" value="3474"/>
</dbReference>
<dbReference type="Reactome" id="R-MMU-2142688">
    <property type="pathway name" value="Synthesis of 5-eicosatetraenoic acids"/>
</dbReference>
<dbReference type="Reactome" id="R-MMU-9754706">
    <property type="pathway name" value="Atorvastatin ADME"/>
</dbReference>
<dbReference type="BioGRID-ORCS" id="18979">
    <property type="hits" value="0 hits in 79 CRISPR screens"/>
</dbReference>
<dbReference type="ChiTaRS" id="Pon1">
    <property type="organism name" value="mouse"/>
</dbReference>
<dbReference type="PRO" id="PR:P52430"/>
<dbReference type="Proteomes" id="UP000000589">
    <property type="component" value="Chromosome 6"/>
</dbReference>
<dbReference type="RNAct" id="P52430">
    <property type="molecule type" value="protein"/>
</dbReference>
<dbReference type="Bgee" id="ENSMUSG00000002588">
    <property type="expression patterns" value="Expressed in pigmented layer of retina and 84 other cell types or tissues"/>
</dbReference>
<dbReference type="ExpressionAtlas" id="P52430">
    <property type="expression patterns" value="baseline and differential"/>
</dbReference>
<dbReference type="GO" id="GO:0034366">
    <property type="term" value="C:spherical high-density lipoprotein particle"/>
    <property type="evidence" value="ECO:0007669"/>
    <property type="project" value="Ensembl"/>
</dbReference>
<dbReference type="GO" id="GO:0102007">
    <property type="term" value="F:acyl-L-homoserine-lactone lactonohydrolase activity"/>
    <property type="evidence" value="ECO:0007669"/>
    <property type="project" value="UniProtKB-EC"/>
</dbReference>
<dbReference type="GO" id="GO:0004063">
    <property type="term" value="F:aryldialkylphosphatase activity"/>
    <property type="evidence" value="ECO:0000250"/>
    <property type="project" value="UniProtKB"/>
</dbReference>
<dbReference type="GO" id="GO:0004064">
    <property type="term" value="F:arylesterase activity"/>
    <property type="evidence" value="ECO:0000315"/>
    <property type="project" value="MGI"/>
</dbReference>
<dbReference type="GO" id="GO:0005509">
    <property type="term" value="F:calcium ion binding"/>
    <property type="evidence" value="ECO:0000250"/>
    <property type="project" value="UniProtKB"/>
</dbReference>
<dbReference type="GO" id="GO:0008035">
    <property type="term" value="F:high-density lipoprotein particle binding"/>
    <property type="evidence" value="ECO:0000304"/>
    <property type="project" value="MGI"/>
</dbReference>
<dbReference type="GO" id="GO:0005543">
    <property type="term" value="F:phospholipid binding"/>
    <property type="evidence" value="ECO:0007669"/>
    <property type="project" value="Ensembl"/>
</dbReference>
<dbReference type="GO" id="GO:0042803">
    <property type="term" value="F:protein homodimerization activity"/>
    <property type="evidence" value="ECO:0007669"/>
    <property type="project" value="Ensembl"/>
</dbReference>
<dbReference type="GO" id="GO:0008015">
    <property type="term" value="P:blood circulation"/>
    <property type="evidence" value="ECO:0000304"/>
    <property type="project" value="MGI"/>
</dbReference>
<dbReference type="GO" id="GO:0046395">
    <property type="term" value="P:carboxylic acid catabolic process"/>
    <property type="evidence" value="ECO:0007669"/>
    <property type="project" value="Ensembl"/>
</dbReference>
<dbReference type="GO" id="GO:0008203">
    <property type="term" value="P:cholesterol metabolic process"/>
    <property type="evidence" value="ECO:0000315"/>
    <property type="project" value="MGI"/>
</dbReference>
<dbReference type="GO" id="GO:1901335">
    <property type="term" value="P:lactone catabolic process"/>
    <property type="evidence" value="ECO:0007669"/>
    <property type="project" value="Ensembl"/>
</dbReference>
<dbReference type="GO" id="GO:0046434">
    <property type="term" value="P:organophosphate catabolic process"/>
    <property type="evidence" value="ECO:0007669"/>
    <property type="project" value="Ensembl"/>
</dbReference>
<dbReference type="GO" id="GO:0046470">
    <property type="term" value="P:phosphatidylcholine metabolic process"/>
    <property type="evidence" value="ECO:0007669"/>
    <property type="project" value="Ensembl"/>
</dbReference>
<dbReference type="GO" id="GO:0010875">
    <property type="term" value="P:positive regulation of cholesterol efflux"/>
    <property type="evidence" value="ECO:0007669"/>
    <property type="project" value="Ensembl"/>
</dbReference>
<dbReference type="GO" id="GO:0009636">
    <property type="term" value="P:response to toxic substance"/>
    <property type="evidence" value="ECO:0000315"/>
    <property type="project" value="MGI"/>
</dbReference>
<dbReference type="FunFam" id="2.120.10.30:FF:000023">
    <property type="entry name" value="Serum paraoxonase/arylesterase 2"/>
    <property type="match status" value="1"/>
</dbReference>
<dbReference type="Gene3D" id="2.120.10.30">
    <property type="entry name" value="TolB, C-terminal domain"/>
    <property type="match status" value="1"/>
</dbReference>
<dbReference type="InterPro" id="IPR011042">
    <property type="entry name" value="6-blade_b-propeller_TolB-like"/>
</dbReference>
<dbReference type="InterPro" id="IPR002640">
    <property type="entry name" value="Arylesterase"/>
</dbReference>
<dbReference type="InterPro" id="IPR008363">
    <property type="entry name" value="Paraoxonase1"/>
</dbReference>
<dbReference type="InterPro" id="IPR051288">
    <property type="entry name" value="Serum_paraoxonase/arylesterase"/>
</dbReference>
<dbReference type="PANTHER" id="PTHR11799">
    <property type="entry name" value="PARAOXONASE"/>
    <property type="match status" value="1"/>
</dbReference>
<dbReference type="PANTHER" id="PTHR11799:SF16">
    <property type="entry name" value="SERUM PARAOXONASE_ARYLESTERASE 1"/>
    <property type="match status" value="1"/>
</dbReference>
<dbReference type="Pfam" id="PF01731">
    <property type="entry name" value="Arylesterase"/>
    <property type="match status" value="1"/>
</dbReference>
<dbReference type="PRINTS" id="PR01785">
    <property type="entry name" value="PARAOXONASE"/>
</dbReference>
<dbReference type="PRINTS" id="PR01786">
    <property type="entry name" value="PARAOXONASE1"/>
</dbReference>
<dbReference type="SUPFAM" id="SSF63829">
    <property type="entry name" value="Calcium-dependent phosphotriesterase"/>
    <property type="match status" value="1"/>
</dbReference>
<sequence>MAKLLALTLVGLVLALYKNHRSSYQTRLNAFREVTPVELPNCNLVKGIETGAEDLEILPNGLTFFSTGLKYPGIKSFDPSKPGKILLMDLNKKEPAVSELEIIGNTLDISSFNPHGISTFTDEDNTVYLLVVNHPDSSSTVEVFKFQEEERSLLHLKTITHELLPSINDIAAIGPESFYATNDHYFADPYLRSWEMYLGLSWSNVVYYSPDKVQVVAEGFDFANGIGISLDGKYVYIAELLAHKIHVYEKHANWTLTPLKVLNFDTLVDNISVDPVTGDLWVGCHPNGMRIFFYDAENPPGSEVLRIQNILSEDPKITVVYAENGTVLQGTTVASVYKGKLLIGTVFHKALYCDL</sequence>
<gene>
    <name type="primary">Pon1</name>
    <name type="synonym">Pon</name>
</gene>
<organism>
    <name type="scientific">Mus musculus</name>
    <name type="common">Mouse</name>
    <dbReference type="NCBI Taxonomy" id="10090"/>
    <lineage>
        <taxon>Eukaryota</taxon>
        <taxon>Metazoa</taxon>
        <taxon>Chordata</taxon>
        <taxon>Craniata</taxon>
        <taxon>Vertebrata</taxon>
        <taxon>Euteleostomi</taxon>
        <taxon>Mammalia</taxon>
        <taxon>Eutheria</taxon>
        <taxon>Euarchontoglires</taxon>
        <taxon>Glires</taxon>
        <taxon>Rodentia</taxon>
        <taxon>Myomorpha</taxon>
        <taxon>Muroidea</taxon>
        <taxon>Muridae</taxon>
        <taxon>Murinae</taxon>
        <taxon>Mus</taxon>
        <taxon>Mus</taxon>
    </lineage>
</organism>